<name>AL7A1_MALDO</name>
<proteinExistence type="evidence at protein level"/>
<reference evidence="6" key="1">
    <citation type="journal article" date="1999" name="Plant Cell Physiol.">
        <title>Identification and cDNA cloning of a protein abundantly expressed during apple fruit development.</title>
        <authorList>
            <person name="Yamada K."/>
            <person name="Mori H."/>
            <person name="Yamaki S."/>
        </authorList>
    </citation>
    <scope>NUCLEOTIDE SEQUENCE [MRNA]</scope>
    <scope>PROTEIN SEQUENCE OF 2-31 AND 386-404</scope>
    <scope>INDUCTION</scope>
    <source>
        <strain>cv. Fuji</strain>
        <tissue>Fruit</tissue>
    </source>
</reference>
<evidence type="ECO:0000250" key="1"/>
<evidence type="ECO:0000250" key="2">
    <source>
        <dbReference type="UniProtKB" id="P83402"/>
    </source>
</evidence>
<evidence type="ECO:0000255" key="3">
    <source>
        <dbReference type="PROSITE-ProRule" id="PRU10007"/>
    </source>
</evidence>
<evidence type="ECO:0000269" key="4">
    <source>
    </source>
</evidence>
<evidence type="ECO:0000303" key="5">
    <source>
    </source>
</evidence>
<evidence type="ECO:0000305" key="6"/>
<evidence type="ECO:0000312" key="7">
    <source>
        <dbReference type="EMBL" id="BAA75633.1"/>
    </source>
</evidence>
<keyword id="KW-0903">Direct protein sequencing</keyword>
<keyword id="KW-0520">NAD</keyword>
<keyword id="KW-0560">Oxidoreductase</keyword>
<dbReference type="EC" id="1.2.1.3"/>
<dbReference type="EMBL" id="D88434">
    <property type="protein sequence ID" value="BAA75633.1"/>
    <property type="molecule type" value="mRNA"/>
</dbReference>
<dbReference type="RefSeq" id="NP_001281025.1">
    <property type="nucleotide sequence ID" value="NM_001294096.1"/>
</dbReference>
<dbReference type="SMR" id="Q9ZPB7"/>
<dbReference type="GeneID" id="103400922"/>
<dbReference type="KEGG" id="mdm:103400922"/>
<dbReference type="OrthoDB" id="310895at2759"/>
<dbReference type="GO" id="GO:0004029">
    <property type="term" value="F:aldehyde dehydrogenase (NAD+) activity"/>
    <property type="evidence" value="ECO:0000250"/>
    <property type="project" value="UniProtKB"/>
</dbReference>
<dbReference type="GO" id="GO:0006081">
    <property type="term" value="P:aldehyde metabolic process"/>
    <property type="evidence" value="ECO:0000250"/>
    <property type="project" value="UniProtKB"/>
</dbReference>
<dbReference type="CDD" id="cd07130">
    <property type="entry name" value="ALDH_F7_AASADH"/>
    <property type="match status" value="1"/>
</dbReference>
<dbReference type="FunFam" id="3.40.309.10:FF:000018">
    <property type="entry name" value="Alpha-aminoadipic semialdehyde dehydrogenase"/>
    <property type="match status" value="1"/>
</dbReference>
<dbReference type="Gene3D" id="3.40.605.10">
    <property type="entry name" value="Aldehyde Dehydrogenase, Chain A, domain 1"/>
    <property type="match status" value="1"/>
</dbReference>
<dbReference type="Gene3D" id="3.40.309.10">
    <property type="entry name" value="Aldehyde Dehydrogenase, Chain A, domain 2"/>
    <property type="match status" value="1"/>
</dbReference>
<dbReference type="InterPro" id="IPR016161">
    <property type="entry name" value="Ald_DH/histidinol_DH"/>
</dbReference>
<dbReference type="InterPro" id="IPR016163">
    <property type="entry name" value="Ald_DH_C"/>
</dbReference>
<dbReference type="InterPro" id="IPR029510">
    <property type="entry name" value="Ald_DH_CS_GLU"/>
</dbReference>
<dbReference type="InterPro" id="IPR016162">
    <property type="entry name" value="Ald_DH_N"/>
</dbReference>
<dbReference type="InterPro" id="IPR015590">
    <property type="entry name" value="Aldehyde_DH_dom"/>
</dbReference>
<dbReference type="InterPro" id="IPR044638">
    <property type="entry name" value="ALDH7A1-like"/>
</dbReference>
<dbReference type="PANTHER" id="PTHR43521">
    <property type="entry name" value="ALPHA-AMINOADIPIC SEMIALDEHYDE DEHYDROGENASE"/>
    <property type="match status" value="1"/>
</dbReference>
<dbReference type="PANTHER" id="PTHR43521:SF1">
    <property type="entry name" value="ALPHA-AMINOADIPIC SEMIALDEHYDE DEHYDROGENASE"/>
    <property type="match status" value="1"/>
</dbReference>
<dbReference type="Pfam" id="PF00171">
    <property type="entry name" value="Aldedh"/>
    <property type="match status" value="1"/>
</dbReference>
<dbReference type="SUPFAM" id="SSF53720">
    <property type="entry name" value="ALDH-like"/>
    <property type="match status" value="1"/>
</dbReference>
<dbReference type="PROSITE" id="PS00687">
    <property type="entry name" value="ALDEHYDE_DEHYDR_GLU"/>
    <property type="match status" value="1"/>
</dbReference>
<sequence length="508" mass="54244">MGFAKKEHEFLSAIGLAPENPGGFINGKWKASGPVISTVSPSNNQEIAKVTEVSMEEYEEGLRSCNDAAKTWKSLPAPKRGEIVRQIGDALREKLQHLGKLVSLEMGKILAEGIGEVQEVIYMCDFAVGLSRQLNGSIIPSERPDHMMFEVWNPLGIVGVITAFNFPCAVLGWNACIALVCGNCVVWKGAPTTPLVTIAVTKLIAEVLEKNNLPAAIFTAFCGGAEIGEAIAKDTRIPLVSFTGSSKVGAKVQQIVTERFGKCLLELSGNNALIVMDDADVGLAVRSIFFAAVGTAGQRCTTCRRLYLHESIYQNVLDKLVGLYNQVKIGDPLEEGTLVGPVHTKASRENFEKGISTIKSQGGKILTGGSVIESDGNFVQPTIVEIASNASVVKEELFGPVLYVMKFKTLEEAIALNNSVPQGLSSSIFTSKPNTIFKWIGPHGSDCGIVNVNIPTNGAEIGGAFGGEKATGGGREAGSDSWKQYMRRSTCTINYGTELPLAQGINFG</sequence>
<comment type="function">
    <text evidence="5">May play a role in fruit development.</text>
</comment>
<comment type="catalytic activity">
    <reaction>
        <text>an aldehyde + NAD(+) + H2O = a carboxylate + NADH + 2 H(+)</text>
        <dbReference type="Rhea" id="RHEA:16185"/>
        <dbReference type="ChEBI" id="CHEBI:15377"/>
        <dbReference type="ChEBI" id="CHEBI:15378"/>
        <dbReference type="ChEBI" id="CHEBI:17478"/>
        <dbReference type="ChEBI" id="CHEBI:29067"/>
        <dbReference type="ChEBI" id="CHEBI:57540"/>
        <dbReference type="ChEBI" id="CHEBI:57945"/>
        <dbReference type="EC" id="1.2.1.3"/>
    </reaction>
</comment>
<comment type="subunit">
    <text evidence="2">Homotetramer.</text>
</comment>
<comment type="developmental stage">
    <text evidence="4">Expressed in developing fruit during the enlargement stage.</text>
</comment>
<comment type="induction">
    <text evidence="5 6">By osmotic pressure changes.</text>
</comment>
<comment type="similarity">
    <text evidence="6">Belongs to the aldehyde dehydrogenase family.</text>
</comment>
<organism evidence="7">
    <name type="scientific">Malus domestica</name>
    <name type="common">Apple</name>
    <name type="synonym">Pyrus malus</name>
    <dbReference type="NCBI Taxonomy" id="3750"/>
    <lineage>
        <taxon>Eukaryota</taxon>
        <taxon>Viridiplantae</taxon>
        <taxon>Streptophyta</taxon>
        <taxon>Embryophyta</taxon>
        <taxon>Tracheophyta</taxon>
        <taxon>Spermatophyta</taxon>
        <taxon>Magnoliopsida</taxon>
        <taxon>eudicotyledons</taxon>
        <taxon>Gunneridae</taxon>
        <taxon>Pentapetalae</taxon>
        <taxon>rosids</taxon>
        <taxon>fabids</taxon>
        <taxon>Rosales</taxon>
        <taxon>Rosaceae</taxon>
        <taxon>Amygdaloideae</taxon>
        <taxon>Maleae</taxon>
        <taxon>Malus</taxon>
    </lineage>
</organism>
<accession>Q9ZPB7</accession>
<protein>
    <recommendedName>
        <fullName>Aldehyde dehydrogenase family 7 member A1</fullName>
        <ecNumber>1.2.1.3</ecNumber>
    </recommendedName>
    <alternativeName>
        <fullName>Antiquitin-1</fullName>
    </alternativeName>
    <alternativeName>
        <fullName>Matured fruit 60 kDa protein</fullName>
        <shortName>MF-60</shortName>
    </alternativeName>
</protein>
<feature type="initiator methionine" description="Removed" evidence="4">
    <location>
        <position position="1"/>
    </location>
</feature>
<feature type="chain" id="PRO_0000056497" description="Aldehyde dehydrogenase family 7 member A1">
    <location>
        <begin position="2"/>
        <end position="508"/>
    </location>
</feature>
<feature type="active site" description="Proton acceptor" evidence="3">
    <location>
        <position position="266"/>
    </location>
</feature>
<feature type="active site" description="Nucleophile" evidence="3">
    <location>
        <position position="300"/>
    </location>
</feature>
<feature type="binding site" evidence="1">
    <location>
        <begin position="244"/>
        <end position="249"/>
    </location>
    <ligand>
        <name>NAD(+)</name>
        <dbReference type="ChEBI" id="CHEBI:57540"/>
    </ligand>
</feature>
<feature type="site" description="Transition state stabilizer" evidence="1">
    <location>
        <position position="165"/>
    </location>
</feature>